<name>HOLIN_LAMBD</name>
<reference key="1">
    <citation type="journal article" date="1982" name="J. Mol. Biol.">
        <title>Nucleotide sequence of bacteriophage lambda DNA.</title>
        <authorList>
            <person name="Sanger F."/>
            <person name="Coulson A.R."/>
            <person name="Hong G.F."/>
            <person name="Hill D.F."/>
            <person name="Petersen G.B."/>
        </authorList>
    </citation>
    <scope>NUCLEOTIDE SEQUENCE [LARGE SCALE GENOMIC DNA]</scope>
</reference>
<reference key="2">
    <citation type="journal article" date="1986" name="J. Bacteriol.">
        <title>Mutational analysis of bacteriophage lambda lysis gene S.</title>
        <authorList>
            <person name="Raab R."/>
            <person name="Neal G."/>
            <person name="Garrett J."/>
            <person name="Grimaila R."/>
            <person name="Fusselman R."/>
            <person name="Young R."/>
        </authorList>
    </citation>
    <scope>NUCLEOTIDE SEQUENCE [GENOMIC DNA]</scope>
    <scope>MUTAGENESIS</scope>
</reference>
<reference key="3">
    <citation type="journal article" date="1996" name="Mol. Microbiol.">
        <title>Two beginnings for a single purpose: the dual-start holins in the regulation of phage lysis.</title>
        <authorList>
            <person name="Blasi U."/>
            <person name="Young R."/>
        </authorList>
    </citation>
    <scope>FUNCTION</scope>
    <scope>ALTERNATIVE INITIATION</scope>
</reference>
<reference key="4">
    <citation type="journal article" date="1999" name="J. Bacteriol.">
        <title>The C-terminal sequence of the lambda holin constitutes a cytoplasmic regulatory domain.</title>
        <authorList>
            <person name="Blasi U."/>
            <person name="Fraisl P."/>
            <person name="Chang C.Y."/>
            <person name="Zhang N."/>
            <person name="Young R."/>
        </authorList>
    </citation>
    <scope>TOPOLOGY</scope>
</reference>
<reference key="5">
    <citation type="journal article" date="1990" name="EMBO J.">
        <title>The lethal lambda S gene encodes its own inhibitor.</title>
        <authorList>
            <person name="Blasi U."/>
            <person name="Chang C.Y."/>
            <person name="Zagotta M.T."/>
            <person name="Nam K.B."/>
            <person name="Young R."/>
        </authorList>
    </citation>
    <scope>FUNCTION (ISOFORM ANTIHOLIN)</scope>
    <scope>ALTERNATIVE INITIATION</scope>
</reference>
<reference key="6">
    <citation type="journal article" date="1990" name="J. Bacteriol.">
        <title>Oligomerization of the bacteriophage lambda S protein in the inner membrane of Escherichia coli.</title>
        <authorList>
            <person name="Zagotta M.T."/>
            <person name="Wilson D.B."/>
        </authorList>
    </citation>
    <scope>SUBCELLULAR LOCATION</scope>
</reference>
<reference key="7">
    <citation type="journal article" date="2000" name="J. Bacteriol.">
        <title>Dimerization between the holin and holin inhibitor of phage lambda.</title>
        <authorList>
            <person name="Grundling A."/>
            <person name="Smith D.L."/>
            <person name="Blasi U."/>
            <person name="Young R."/>
        </authorList>
    </citation>
    <scope>INTERACTION WITH ISOFORM ANTIHOLIN (ISOFORM HOLIN)</scope>
</reference>
<reference key="8">
    <citation type="journal article" date="2000" name="J. Bacteriol.">
        <title>Genetic and biochemical analysis of dimer and oligomer interactions of the lambda S holin.</title>
        <authorList>
            <person name="Grundling A."/>
            <person name="Blasi U."/>
            <person name="Young R."/>
        </authorList>
    </citation>
    <scope>SUBUNIT</scope>
    <scope>MUTAGENESIS OF ALA-48; CYS-51 AND ALA-52</scope>
</reference>
<reference key="9">
    <citation type="journal article" date="2008" name="Mol. Microbiol.">
        <title>The holin of bacteriophage lambda forms rings with large diameter.</title>
        <authorList>
            <person name="Savva C.G."/>
            <person name="Dewey J.S."/>
            <person name="Deaton J."/>
            <person name="White R.L."/>
            <person name="Struck D.K."/>
            <person name="Holzenburg A."/>
            <person name="Young R."/>
        </authorList>
    </citation>
    <scope>FUNCTION (ISOFORM HOLIN)</scope>
</reference>
<reference key="10">
    <citation type="journal article" date="2010" name="J. Bacteriol.">
        <title>The N-terminal transmembrane domain of lambda S is required for holin but not antiholin function.</title>
        <authorList>
            <person name="White R."/>
            <person name="Tran T.A."/>
            <person name="Dankenbring C.A."/>
            <person name="Deaton J."/>
            <person name="Young R."/>
        </authorList>
    </citation>
    <scope>TOPOLOGY</scope>
    <scope>FORMYLATION AT MET-1 (ISOFORM HOLIN)</scope>
</reference>
<reference key="11">
    <citation type="journal article" date="2011" name="Proc. Natl. Acad. Sci. U.S.A.">
        <title>Holin triggering in real time.</title>
        <authorList>
            <person name="White R."/>
            <person name="Chiba S."/>
            <person name="Pang T."/>
            <person name="Dewey J.S."/>
            <person name="Savva C.G."/>
            <person name="Holzenburg A."/>
            <person name="Pogliano K."/>
            <person name="Young R."/>
        </authorList>
    </citation>
    <scope>FUNCTION (ISOFORM HOLIN)</scope>
    <scope>FUNCTION (ISOFORM ANTIHOLIN)</scope>
</reference>
<reference key="12">
    <citation type="journal article" date="2013" name="Curr. Opin. Microbiol.">
        <title>Phage lysis: do we have the hole story yet?</title>
        <authorList>
            <person name="Young R."/>
        </authorList>
    </citation>
    <scope>REVIEW</scope>
</reference>
<protein>
    <recommendedName>
        <fullName evidence="11">Antiholin</fullName>
    </recommendedName>
    <alternativeName>
        <fullName evidence="11">Lysis inhibitor S-107</fullName>
    </alternativeName>
</protein>
<organism>
    <name type="scientific">Escherichia phage lambda</name>
    <name type="common">Bacteriophage lambda</name>
    <dbReference type="NCBI Taxonomy" id="2681611"/>
    <lineage>
        <taxon>Viruses</taxon>
        <taxon>Duplodnaviria</taxon>
        <taxon>Heunggongvirae</taxon>
        <taxon>Uroviricota</taxon>
        <taxon>Caudoviricetes</taxon>
        <taxon>Lambdavirus</taxon>
        <taxon>Lambdavirus lambda</taxon>
    </lineage>
</organism>
<comment type="function">
    <molecule>Isoform Holin</molecule>
    <text evidence="4 6">Accumulates harmlessly in the cytoplasmic membrane until it reaches a critical concentration that triggers the formation of micron-scale pores (holes) causing host cell membrane disruption and endolysin escape into the periplasmic space (PubMed:18788120, PubMed:21187415). Determines the precise timing of host cell lysis (PubMed:21187415). Participates with the endolysin and spanin proteins in the sequential events which lead to the programmed host cell lysis releasing the mature viral particles from the host cell (PubMed:21187415).</text>
</comment>
<comment type="function">
    <molecule>Isoform Antiholin</molecule>
    <text evidence="6 8">Counteracts the aggregation of the holin molecules and thus of pore formation.</text>
</comment>
<comment type="subunit">
    <molecule>Isoform Holin</molecule>
    <text evidence="2 3">Homomultimer (PubMed:11029428). Interacts with isoform Antiholin; this interaction blocks the holin homomultimerization and delays host cell lysis (PubMed:11029427).</text>
</comment>
<comment type="subcellular location">
    <subcellularLocation>
        <location evidence="7">Host cell inner membrane</location>
        <topology evidence="5">Multi-pass membrane protein</topology>
    </subcellularLocation>
    <text evidence="12">Classified as a class I holin.</text>
</comment>
<comment type="alternative products">
    <event type="alternative initiation"/>
    <isoform>
        <id>P03705-1</id>
        <name>Antiholin</name>
        <name evidence="10 11">Lysis inhibitor S-107</name>
        <sequence type="displayed"/>
    </isoform>
    <isoform>
        <id>P03705-2</id>
        <name evidence="11">Holin</name>
        <name evidence="10 11">Lysis protein S-105</name>
        <sequence type="described" ref="VSP_018685"/>
    </isoform>
</comment>
<comment type="induction">
    <text>Expressed in the late phase of the viral replicative cycle.</text>
</comment>
<comment type="domain">
    <molecule>Isoform Holin</molecule>
    <text evidence="5">Has 3 transmembrane regions whereas isoform Antiholin lacks the first transmembrane region.</text>
</comment>
<comment type="domain">
    <text>The C-terminus acts as a cytoplasmic regulatory region.</text>
</comment>
<comment type="similarity">
    <text evidence="12">Belongs to the lambdavirus holin family.</text>
</comment>
<organismHost>
    <name type="scientific">Escherichia coli</name>
    <dbReference type="NCBI Taxonomy" id="562"/>
</organismHost>
<proteinExistence type="evidence at protein level"/>
<keyword id="KW-0024">Alternative initiation</keyword>
<keyword id="KW-0204">Cytolysis</keyword>
<keyword id="KW-0291">Formylation</keyword>
<keyword id="KW-1030">Host cell inner membrane</keyword>
<keyword id="KW-0578">Host cell lysis by virus</keyword>
<keyword id="KW-1032">Host cell membrane</keyword>
<keyword id="KW-1043">Host membrane</keyword>
<keyword id="KW-0426">Late protein</keyword>
<keyword id="KW-0472">Membrane</keyword>
<keyword id="KW-1185">Reference proteome</keyword>
<keyword id="KW-0812">Transmembrane</keyword>
<keyword id="KW-1133">Transmembrane helix</keyword>
<keyword id="KW-1188">Viral release from host cell</keyword>
<evidence type="ECO:0000255" key="1"/>
<evidence type="ECO:0000269" key="2">
    <source>
    </source>
</evidence>
<evidence type="ECO:0000269" key="3">
    <source>
    </source>
</evidence>
<evidence type="ECO:0000269" key="4">
    <source>
    </source>
</evidence>
<evidence type="ECO:0000269" key="5">
    <source>
    </source>
</evidence>
<evidence type="ECO:0000269" key="6">
    <source>
    </source>
</evidence>
<evidence type="ECO:0000269" key="7">
    <source>
    </source>
</evidence>
<evidence type="ECO:0000269" key="8">
    <source>
    </source>
</evidence>
<evidence type="ECO:0000269" key="9">
    <source>
    </source>
</evidence>
<evidence type="ECO:0000303" key="10">
    <source>
    </source>
</evidence>
<evidence type="ECO:0000303" key="11">
    <source>
    </source>
</evidence>
<evidence type="ECO:0000305" key="12"/>
<evidence type="ECO:0000305" key="13">
    <source>
    </source>
</evidence>
<feature type="chain" id="PRO_0000003370" description="Antiholin">
    <location>
        <begin position="1"/>
        <end position="107"/>
    </location>
</feature>
<feature type="topological domain" description="Cytoplasmic" evidence="5">
    <location>
        <begin position="1"/>
        <end position="37"/>
    </location>
</feature>
<feature type="transmembrane region" description="Helical" evidence="1">
    <location>
        <begin position="38"/>
        <end position="58"/>
    </location>
</feature>
<feature type="topological domain" description="Periplasmic" evidence="5">
    <location>
        <begin position="59"/>
        <end position="70"/>
    </location>
</feature>
<feature type="transmembrane region" description="Helical" evidence="1">
    <location>
        <begin position="71"/>
        <end position="91"/>
    </location>
</feature>
<feature type="topological domain" description="Cytoplasmic" evidence="13">
    <location>
        <begin position="92"/>
        <end position="107"/>
    </location>
</feature>
<feature type="splice variant" id="VSP_018685" description="In isoform Holin." evidence="8 9">
    <location>
        <begin position="1"/>
        <end position="2"/>
    </location>
</feature>
<feature type="mutagenesis site" description="Complete loss of holin function." evidence="3">
    <original>A</original>
    <variation>V</variation>
    <location>
        <position position="48"/>
    </location>
</feature>
<feature type="mutagenesis site" description="No effect on holin function." evidence="3">
    <original>C</original>
    <variation>S</variation>
    <location>
        <position position="51"/>
    </location>
</feature>
<feature type="mutagenesis site" description="Lysis-defective, dimerizes but does not form cross-linkable oligomers." evidence="3">
    <original>A</original>
    <variation>V</variation>
    <location>
        <position position="52"/>
    </location>
</feature>
<feature type="topological domain" description="Periplasmic" evidence="5">
    <location sequence="P03705-2">
        <begin position="1"/>
        <end position="6"/>
    </location>
</feature>
<feature type="transmembrane region" description="Helical" evidence="1">
    <location sequence="P03705-2">
        <begin position="7"/>
        <end position="26"/>
    </location>
</feature>
<feature type="topological domain" description="Cytoplasmic" evidence="5">
    <location sequence="P03705-2">
        <begin position="27"/>
        <end position="35"/>
    </location>
</feature>
<feature type="modified residue" description="N-formylmethionine" evidence="5">
    <location sequence="P03705-2">
        <position position="1"/>
    </location>
</feature>
<sequence>MKMPEKHDLLAAILAAKEQGIGAILAFAMAYLRGRYNGGAFTKTVIDATMCAIIAWFIRDLLDFAGLSSNLAYITSVFIGYIGTDSIGSLIKRFAAKKAGVEDGRNQ</sequence>
<accession>P03705</accession>
<gene>
    <name type="primary">S</name>
</gene>
<dbReference type="EMBL" id="J02459">
    <property type="protein sequence ID" value="AAA96597.1"/>
    <property type="molecule type" value="Genomic_DNA"/>
</dbReference>
<dbReference type="EMBL" id="M14035">
    <property type="protein sequence ID" value="AAA32248.1"/>
    <property type="molecule type" value="Genomic_DNA"/>
</dbReference>
<dbReference type="PIR" id="H94164">
    <property type="entry name" value="YVBPL"/>
</dbReference>
<dbReference type="RefSeq" id="NP_040644.1">
    <molecule id="P03705-1"/>
    <property type="nucleotide sequence ID" value="NC_001416.1"/>
</dbReference>
<dbReference type="IntAct" id="P03705">
    <property type="interactions" value="3"/>
</dbReference>
<dbReference type="TCDB" id="1.E.2.1.1">
    <property type="family name" value="the Lambda holin s (Lambda holin) family"/>
</dbReference>
<dbReference type="GeneID" id="2703479"/>
<dbReference type="KEGG" id="vg:2703479"/>
<dbReference type="Proteomes" id="UP000001711">
    <property type="component" value="Genome"/>
</dbReference>
<dbReference type="GO" id="GO:0020002">
    <property type="term" value="C:host cell plasma membrane"/>
    <property type="evidence" value="ECO:0000314"/>
    <property type="project" value="CACAO"/>
</dbReference>
<dbReference type="GO" id="GO:0016020">
    <property type="term" value="C:membrane"/>
    <property type="evidence" value="ECO:0007669"/>
    <property type="project" value="UniProtKB-KW"/>
</dbReference>
<dbReference type="GO" id="GO:0140911">
    <property type="term" value="F:pore-forming activity"/>
    <property type="evidence" value="ECO:0000315"/>
    <property type="project" value="CACAO"/>
</dbReference>
<dbReference type="GO" id="GO:0045918">
    <property type="term" value="P:negative regulation of cytolysis"/>
    <property type="evidence" value="ECO:0000314"/>
    <property type="project" value="CACAO"/>
</dbReference>
<dbReference type="GO" id="GO:0044659">
    <property type="term" value="P:viral release from host cell by cytolysis"/>
    <property type="evidence" value="ECO:0000314"/>
    <property type="project" value="UniProtKB"/>
</dbReference>
<dbReference type="InterPro" id="IPR006481">
    <property type="entry name" value="Phage_lambda_GpS_holin"/>
</dbReference>
<dbReference type="NCBIfam" id="TIGR01594">
    <property type="entry name" value="holin_lambda"/>
    <property type="match status" value="1"/>
</dbReference>
<dbReference type="Pfam" id="PF05106">
    <property type="entry name" value="Phage_holin_3_1"/>
    <property type="match status" value="1"/>
</dbReference>